<keyword id="KW-0963">Cytoplasm</keyword>
<keyword id="KW-0275">Fatty acid biosynthesis</keyword>
<keyword id="KW-0276">Fatty acid metabolism</keyword>
<keyword id="KW-0444">Lipid biosynthesis</keyword>
<keyword id="KW-0443">Lipid metabolism</keyword>
<keyword id="KW-0596">Phosphopantetheine</keyword>
<keyword id="KW-0597">Phosphoprotein</keyword>
<reference key="1">
    <citation type="journal article" date="2006" name="DNA Res.">
        <title>Genome sequence of the cat pathogen, Chlamydophila felis.</title>
        <authorList>
            <person name="Azuma Y."/>
            <person name="Hirakawa H."/>
            <person name="Yamashita A."/>
            <person name="Cai Y."/>
            <person name="Rahman M.A."/>
            <person name="Suzuki H."/>
            <person name="Mitaku S."/>
            <person name="Toh H."/>
            <person name="Goto S."/>
            <person name="Murakami T."/>
            <person name="Sugi K."/>
            <person name="Hayashi H."/>
            <person name="Fukushi H."/>
            <person name="Hattori M."/>
            <person name="Kuhara S."/>
            <person name="Shirai M."/>
        </authorList>
    </citation>
    <scope>NUCLEOTIDE SEQUENCE [LARGE SCALE GENOMIC DNA]</scope>
    <source>
        <strain>Fe/C-56</strain>
    </source>
</reference>
<dbReference type="EMBL" id="AP006861">
    <property type="protein sequence ID" value="BAE81292.1"/>
    <property type="molecule type" value="Genomic_DNA"/>
</dbReference>
<dbReference type="RefSeq" id="WP_011458072.1">
    <property type="nucleotide sequence ID" value="NC_007899.1"/>
</dbReference>
<dbReference type="SMR" id="Q254J6"/>
<dbReference type="STRING" id="264202.CF0520"/>
<dbReference type="KEGG" id="cfe:CF0520"/>
<dbReference type="eggNOG" id="COG0236">
    <property type="taxonomic scope" value="Bacteria"/>
</dbReference>
<dbReference type="HOGENOM" id="CLU_108696_5_1_0"/>
<dbReference type="OrthoDB" id="9804551at2"/>
<dbReference type="UniPathway" id="UPA00094"/>
<dbReference type="Proteomes" id="UP000001260">
    <property type="component" value="Chromosome"/>
</dbReference>
<dbReference type="GO" id="GO:0005829">
    <property type="term" value="C:cytosol"/>
    <property type="evidence" value="ECO:0007669"/>
    <property type="project" value="TreeGrafter"/>
</dbReference>
<dbReference type="GO" id="GO:0016020">
    <property type="term" value="C:membrane"/>
    <property type="evidence" value="ECO:0007669"/>
    <property type="project" value="GOC"/>
</dbReference>
<dbReference type="GO" id="GO:0000035">
    <property type="term" value="F:acyl binding"/>
    <property type="evidence" value="ECO:0007669"/>
    <property type="project" value="TreeGrafter"/>
</dbReference>
<dbReference type="GO" id="GO:0000036">
    <property type="term" value="F:acyl carrier activity"/>
    <property type="evidence" value="ECO:0007669"/>
    <property type="project" value="UniProtKB-UniRule"/>
</dbReference>
<dbReference type="GO" id="GO:0009245">
    <property type="term" value="P:lipid A biosynthetic process"/>
    <property type="evidence" value="ECO:0007669"/>
    <property type="project" value="TreeGrafter"/>
</dbReference>
<dbReference type="Gene3D" id="1.10.1200.10">
    <property type="entry name" value="ACP-like"/>
    <property type="match status" value="1"/>
</dbReference>
<dbReference type="HAMAP" id="MF_01217">
    <property type="entry name" value="Acyl_carrier"/>
    <property type="match status" value="1"/>
</dbReference>
<dbReference type="InterPro" id="IPR003231">
    <property type="entry name" value="ACP"/>
</dbReference>
<dbReference type="InterPro" id="IPR036736">
    <property type="entry name" value="ACP-like_sf"/>
</dbReference>
<dbReference type="InterPro" id="IPR009081">
    <property type="entry name" value="PP-bd_ACP"/>
</dbReference>
<dbReference type="InterPro" id="IPR006162">
    <property type="entry name" value="Ppantetheine_attach_site"/>
</dbReference>
<dbReference type="NCBIfam" id="TIGR00517">
    <property type="entry name" value="acyl_carrier"/>
    <property type="match status" value="1"/>
</dbReference>
<dbReference type="NCBIfam" id="NF002148">
    <property type="entry name" value="PRK00982.1-2"/>
    <property type="match status" value="1"/>
</dbReference>
<dbReference type="NCBIfam" id="NF002150">
    <property type="entry name" value="PRK00982.1-4"/>
    <property type="match status" value="1"/>
</dbReference>
<dbReference type="PANTHER" id="PTHR20863">
    <property type="entry name" value="ACYL CARRIER PROTEIN"/>
    <property type="match status" value="1"/>
</dbReference>
<dbReference type="PANTHER" id="PTHR20863:SF76">
    <property type="entry name" value="CARRIER DOMAIN-CONTAINING PROTEIN"/>
    <property type="match status" value="1"/>
</dbReference>
<dbReference type="Pfam" id="PF00550">
    <property type="entry name" value="PP-binding"/>
    <property type="match status" value="1"/>
</dbReference>
<dbReference type="SUPFAM" id="SSF47336">
    <property type="entry name" value="ACP-like"/>
    <property type="match status" value="1"/>
</dbReference>
<dbReference type="PROSITE" id="PS50075">
    <property type="entry name" value="CARRIER"/>
    <property type="match status" value="1"/>
</dbReference>
<dbReference type="PROSITE" id="PS00012">
    <property type="entry name" value="PHOSPHOPANTETHEINE"/>
    <property type="match status" value="1"/>
</dbReference>
<sequence>MSLEDDVKLIIVDQLGVDASEVNENSSFIEDLNADSLDLTELIMTLEEKFDFEISEQDAEKLRTVGDVITYIKTRQGE</sequence>
<accession>Q254J6</accession>
<comment type="function">
    <text evidence="1">Carrier of the growing fatty acid chain in fatty acid biosynthesis.</text>
</comment>
<comment type="pathway">
    <text evidence="1">Lipid metabolism; fatty acid biosynthesis.</text>
</comment>
<comment type="subcellular location">
    <subcellularLocation>
        <location evidence="1">Cytoplasm</location>
    </subcellularLocation>
</comment>
<comment type="PTM">
    <text evidence="1">4'-phosphopantetheine is transferred from CoA to a specific serine of apo-ACP by AcpS. This modification is essential for activity because fatty acids are bound in thioester linkage to the sulfhydryl of the prosthetic group.</text>
</comment>
<comment type="similarity">
    <text evidence="1">Belongs to the acyl carrier protein (ACP) family.</text>
</comment>
<name>ACP_CHLFF</name>
<organism>
    <name type="scientific">Chlamydia felis (strain Fe/C-56)</name>
    <name type="common">Chlamydophila felis</name>
    <dbReference type="NCBI Taxonomy" id="264202"/>
    <lineage>
        <taxon>Bacteria</taxon>
        <taxon>Pseudomonadati</taxon>
        <taxon>Chlamydiota</taxon>
        <taxon>Chlamydiia</taxon>
        <taxon>Chlamydiales</taxon>
        <taxon>Chlamydiaceae</taxon>
        <taxon>Chlamydia/Chlamydophila group</taxon>
        <taxon>Chlamydia</taxon>
    </lineage>
</organism>
<gene>
    <name evidence="1" type="primary">acpP</name>
    <name type="ordered locus">CF0520</name>
</gene>
<protein>
    <recommendedName>
        <fullName evidence="1">Acyl carrier protein</fullName>
        <shortName evidence="1">ACP</shortName>
    </recommendedName>
</protein>
<feature type="chain" id="PRO_1000066587" description="Acyl carrier protein">
    <location>
        <begin position="1"/>
        <end position="78"/>
    </location>
</feature>
<feature type="domain" description="Carrier" evidence="2">
    <location>
        <begin position="1"/>
        <end position="76"/>
    </location>
</feature>
<feature type="modified residue" description="O-(pantetheine 4'-phosphoryl)serine" evidence="2">
    <location>
        <position position="36"/>
    </location>
</feature>
<proteinExistence type="inferred from homology"/>
<evidence type="ECO:0000255" key="1">
    <source>
        <dbReference type="HAMAP-Rule" id="MF_01217"/>
    </source>
</evidence>
<evidence type="ECO:0000255" key="2">
    <source>
        <dbReference type="PROSITE-ProRule" id="PRU00258"/>
    </source>
</evidence>